<reference key="1">
    <citation type="journal article" date="2007" name="J. Bacteriol.">
        <title>Genome-wide transcriptional changes in Streptococcus gordonii in response to competence signaling peptide.</title>
        <authorList>
            <person name="Vickerman M.M."/>
            <person name="Iobst S."/>
            <person name="Jesionowski A.M."/>
            <person name="Gill S.R."/>
        </authorList>
    </citation>
    <scope>NUCLEOTIDE SEQUENCE [LARGE SCALE GENOMIC DNA]</scope>
    <source>
        <strain>Challis / ATCC 35105 / BCRC 15272 / CH1 / DL1 / V288</strain>
    </source>
</reference>
<reference key="2">
    <citation type="journal article" date="1993" name="J. Bacteriol.">
        <title>Construction of recombination-deficient strains of Streptococcus gordonii by disruption of the recA gene.</title>
        <authorList>
            <person name="Vickerman M.M."/>
            <person name="Heath D.G."/>
            <person name="Clewell D.B."/>
        </authorList>
    </citation>
    <scope>NUCLEOTIDE SEQUENCE [GENOMIC DNA] OF 105-175</scope>
</reference>
<proteinExistence type="inferred from homology"/>
<feature type="chain" id="PRO_0000122855" description="Protein RecA">
    <location>
        <begin position="1"/>
        <end position="383"/>
    </location>
</feature>
<feature type="binding site" evidence="1">
    <location>
        <begin position="79"/>
        <end position="86"/>
    </location>
    <ligand>
        <name>ATP</name>
        <dbReference type="ChEBI" id="CHEBI:30616"/>
    </ligand>
</feature>
<accession>P49986</accession>
<accession>A8AZT3</accession>
<dbReference type="EMBL" id="CP000725">
    <property type="protein sequence ID" value="ABV10463.1"/>
    <property type="molecule type" value="Genomic_DNA"/>
</dbReference>
<dbReference type="EMBL" id="L20574">
    <property type="protein sequence ID" value="AAA26966.1"/>
    <property type="molecule type" value="Genomic_DNA"/>
</dbReference>
<dbReference type="RefSeq" id="WP_012131014.1">
    <property type="nucleotide sequence ID" value="NC_009785.1"/>
</dbReference>
<dbReference type="SMR" id="P49986"/>
<dbReference type="STRING" id="467705.SGO_2045"/>
<dbReference type="KEGG" id="sgo:SGO_2045"/>
<dbReference type="eggNOG" id="COG0468">
    <property type="taxonomic scope" value="Bacteria"/>
</dbReference>
<dbReference type="HOGENOM" id="CLU_040469_3_2_9"/>
<dbReference type="Proteomes" id="UP000001131">
    <property type="component" value="Chromosome"/>
</dbReference>
<dbReference type="GO" id="GO:0005829">
    <property type="term" value="C:cytosol"/>
    <property type="evidence" value="ECO:0007669"/>
    <property type="project" value="TreeGrafter"/>
</dbReference>
<dbReference type="GO" id="GO:0005524">
    <property type="term" value="F:ATP binding"/>
    <property type="evidence" value="ECO:0007669"/>
    <property type="project" value="UniProtKB-UniRule"/>
</dbReference>
<dbReference type="GO" id="GO:0016887">
    <property type="term" value="F:ATP hydrolysis activity"/>
    <property type="evidence" value="ECO:0007669"/>
    <property type="project" value="InterPro"/>
</dbReference>
<dbReference type="GO" id="GO:0140664">
    <property type="term" value="F:ATP-dependent DNA damage sensor activity"/>
    <property type="evidence" value="ECO:0007669"/>
    <property type="project" value="InterPro"/>
</dbReference>
<dbReference type="GO" id="GO:0003684">
    <property type="term" value="F:damaged DNA binding"/>
    <property type="evidence" value="ECO:0007669"/>
    <property type="project" value="UniProtKB-UniRule"/>
</dbReference>
<dbReference type="GO" id="GO:0003697">
    <property type="term" value="F:single-stranded DNA binding"/>
    <property type="evidence" value="ECO:0007669"/>
    <property type="project" value="UniProtKB-UniRule"/>
</dbReference>
<dbReference type="GO" id="GO:0006310">
    <property type="term" value="P:DNA recombination"/>
    <property type="evidence" value="ECO:0007669"/>
    <property type="project" value="UniProtKB-UniRule"/>
</dbReference>
<dbReference type="GO" id="GO:0006281">
    <property type="term" value="P:DNA repair"/>
    <property type="evidence" value="ECO:0007669"/>
    <property type="project" value="UniProtKB-UniRule"/>
</dbReference>
<dbReference type="GO" id="GO:0009432">
    <property type="term" value="P:SOS response"/>
    <property type="evidence" value="ECO:0007669"/>
    <property type="project" value="UniProtKB-UniRule"/>
</dbReference>
<dbReference type="CDD" id="cd00983">
    <property type="entry name" value="RecA"/>
    <property type="match status" value="1"/>
</dbReference>
<dbReference type="FunFam" id="3.40.50.300:FF:000087">
    <property type="entry name" value="Recombinase RecA"/>
    <property type="match status" value="1"/>
</dbReference>
<dbReference type="Gene3D" id="3.40.50.300">
    <property type="entry name" value="P-loop containing nucleotide triphosphate hydrolases"/>
    <property type="match status" value="1"/>
</dbReference>
<dbReference type="HAMAP" id="MF_00268">
    <property type="entry name" value="RecA"/>
    <property type="match status" value="1"/>
</dbReference>
<dbReference type="InterPro" id="IPR003593">
    <property type="entry name" value="AAA+_ATPase"/>
</dbReference>
<dbReference type="InterPro" id="IPR013765">
    <property type="entry name" value="DNA_recomb/repair_RecA"/>
</dbReference>
<dbReference type="InterPro" id="IPR020584">
    <property type="entry name" value="DNA_recomb/repair_RecA_CS"/>
</dbReference>
<dbReference type="InterPro" id="IPR027417">
    <property type="entry name" value="P-loop_NTPase"/>
</dbReference>
<dbReference type="InterPro" id="IPR049261">
    <property type="entry name" value="RecA-like_C"/>
</dbReference>
<dbReference type="InterPro" id="IPR049428">
    <property type="entry name" value="RecA-like_N"/>
</dbReference>
<dbReference type="InterPro" id="IPR020588">
    <property type="entry name" value="RecA_ATP-bd"/>
</dbReference>
<dbReference type="InterPro" id="IPR023400">
    <property type="entry name" value="RecA_C_sf"/>
</dbReference>
<dbReference type="InterPro" id="IPR020587">
    <property type="entry name" value="RecA_monomer-monomer_interface"/>
</dbReference>
<dbReference type="NCBIfam" id="TIGR02012">
    <property type="entry name" value="tigrfam_recA"/>
    <property type="match status" value="1"/>
</dbReference>
<dbReference type="PANTHER" id="PTHR45900:SF1">
    <property type="entry name" value="MITOCHONDRIAL DNA REPAIR PROTEIN RECA HOMOLOG-RELATED"/>
    <property type="match status" value="1"/>
</dbReference>
<dbReference type="PANTHER" id="PTHR45900">
    <property type="entry name" value="RECA"/>
    <property type="match status" value="1"/>
</dbReference>
<dbReference type="Pfam" id="PF00154">
    <property type="entry name" value="RecA"/>
    <property type="match status" value="1"/>
</dbReference>
<dbReference type="Pfam" id="PF21096">
    <property type="entry name" value="RecA_C"/>
    <property type="match status" value="1"/>
</dbReference>
<dbReference type="PRINTS" id="PR00142">
    <property type="entry name" value="RECA"/>
</dbReference>
<dbReference type="SMART" id="SM00382">
    <property type="entry name" value="AAA"/>
    <property type="match status" value="1"/>
</dbReference>
<dbReference type="SUPFAM" id="SSF52540">
    <property type="entry name" value="P-loop containing nucleoside triphosphate hydrolases"/>
    <property type="match status" value="1"/>
</dbReference>
<dbReference type="SUPFAM" id="SSF54752">
    <property type="entry name" value="RecA protein, C-terminal domain"/>
    <property type="match status" value="1"/>
</dbReference>
<dbReference type="PROSITE" id="PS00321">
    <property type="entry name" value="RECA_1"/>
    <property type="match status" value="1"/>
</dbReference>
<dbReference type="PROSITE" id="PS50162">
    <property type="entry name" value="RECA_2"/>
    <property type="match status" value="1"/>
</dbReference>
<dbReference type="PROSITE" id="PS50163">
    <property type="entry name" value="RECA_3"/>
    <property type="match status" value="1"/>
</dbReference>
<name>RECA_STRGC</name>
<gene>
    <name evidence="1" type="primary">recA</name>
    <name type="ordered locus">SGO_2045</name>
</gene>
<sequence length="383" mass="41291">MAKKQKNLDDITKKFGDERQKALDNALKNIEKDFGKGAIMRLGERAEQKVQVMSSGSLALDIALGAGGYPKGRIIEIYGPESSGKTTVALHAVAQAQKEGGIAAFIDAEHALDPSYAAALGVNIDELLLSQPDSGEQGLEIAGKLIDSGAVDLVVIDSVAALVPRAEIDGDIGDSHVGLQARMMSQAMRKLSASINKTKTIAIFINQLREKVGVMFGNPETTPGGRALKFYASVRLDVRGNTQIKGTGDAKDTNVGKETKIKVVKNKVAPPFKEAFVEIMYGEGISKTGELIKIATDLNIIKKAGAWYSYNDEKIGQGSENAKKYLADHPEVFDEIDRQVRVRFGLIEDDQEGEATAAETTGKITENIEEVTLELDDAIEIEE</sequence>
<evidence type="ECO:0000255" key="1">
    <source>
        <dbReference type="HAMAP-Rule" id="MF_00268"/>
    </source>
</evidence>
<comment type="function">
    <text evidence="1">Can catalyze the hydrolysis of ATP in the presence of single-stranded DNA, the ATP-dependent uptake of single-stranded DNA by duplex DNA, and the ATP-dependent hybridization of homologous single-stranded DNAs. It interacts with LexA causing its activation and leading to its autocatalytic cleavage.</text>
</comment>
<comment type="subcellular location">
    <subcellularLocation>
        <location evidence="1">Cytoplasm</location>
    </subcellularLocation>
</comment>
<comment type="similarity">
    <text evidence="1">Belongs to the RecA family.</text>
</comment>
<organism>
    <name type="scientific">Streptococcus gordonii (strain Challis / ATCC 35105 / BCRC 15272 / CH1 / DL1 / V288)</name>
    <dbReference type="NCBI Taxonomy" id="467705"/>
    <lineage>
        <taxon>Bacteria</taxon>
        <taxon>Bacillati</taxon>
        <taxon>Bacillota</taxon>
        <taxon>Bacilli</taxon>
        <taxon>Lactobacillales</taxon>
        <taxon>Streptococcaceae</taxon>
        <taxon>Streptococcus</taxon>
    </lineage>
</organism>
<keyword id="KW-0067">ATP-binding</keyword>
<keyword id="KW-0963">Cytoplasm</keyword>
<keyword id="KW-0227">DNA damage</keyword>
<keyword id="KW-0233">DNA recombination</keyword>
<keyword id="KW-0234">DNA repair</keyword>
<keyword id="KW-0238">DNA-binding</keyword>
<keyword id="KW-0547">Nucleotide-binding</keyword>
<keyword id="KW-1185">Reference proteome</keyword>
<keyword id="KW-0742">SOS response</keyword>
<protein>
    <recommendedName>
        <fullName evidence="1">Protein RecA</fullName>
    </recommendedName>
    <alternativeName>
        <fullName evidence="1">Recombinase A</fullName>
    </alternativeName>
</protein>